<name>DNAJ_VIBCM</name>
<protein>
    <recommendedName>
        <fullName evidence="1">Chaperone protein DnaJ</fullName>
    </recommendedName>
</protein>
<keyword id="KW-0143">Chaperone</keyword>
<keyword id="KW-0963">Cytoplasm</keyword>
<keyword id="KW-0235">DNA replication</keyword>
<keyword id="KW-0479">Metal-binding</keyword>
<keyword id="KW-0677">Repeat</keyword>
<keyword id="KW-0346">Stress response</keyword>
<keyword id="KW-0862">Zinc</keyword>
<keyword id="KW-0863">Zinc-finger</keyword>
<proteinExistence type="inferred from homology"/>
<evidence type="ECO:0000255" key="1">
    <source>
        <dbReference type="HAMAP-Rule" id="MF_01152"/>
    </source>
</evidence>
<organism>
    <name type="scientific">Vibrio cholerae serotype O1 (strain M66-2)</name>
    <dbReference type="NCBI Taxonomy" id="579112"/>
    <lineage>
        <taxon>Bacteria</taxon>
        <taxon>Pseudomonadati</taxon>
        <taxon>Pseudomonadota</taxon>
        <taxon>Gammaproteobacteria</taxon>
        <taxon>Vibrionales</taxon>
        <taxon>Vibrionaceae</taxon>
        <taxon>Vibrio</taxon>
    </lineage>
</organism>
<dbReference type="EMBL" id="CP001233">
    <property type="protein sequence ID" value="ACP05132.1"/>
    <property type="molecule type" value="Genomic_DNA"/>
</dbReference>
<dbReference type="RefSeq" id="WP_000043914.1">
    <property type="nucleotide sequence ID" value="NC_012578.1"/>
</dbReference>
<dbReference type="SMR" id="C3LTA6"/>
<dbReference type="GeneID" id="89515026"/>
<dbReference type="KEGG" id="vcm:VCM66_0813"/>
<dbReference type="HOGENOM" id="CLU_017633_0_7_6"/>
<dbReference type="Proteomes" id="UP000001217">
    <property type="component" value="Chromosome I"/>
</dbReference>
<dbReference type="GO" id="GO:0005737">
    <property type="term" value="C:cytoplasm"/>
    <property type="evidence" value="ECO:0007669"/>
    <property type="project" value="UniProtKB-SubCell"/>
</dbReference>
<dbReference type="GO" id="GO:0005524">
    <property type="term" value="F:ATP binding"/>
    <property type="evidence" value="ECO:0007669"/>
    <property type="project" value="InterPro"/>
</dbReference>
<dbReference type="GO" id="GO:0031072">
    <property type="term" value="F:heat shock protein binding"/>
    <property type="evidence" value="ECO:0007669"/>
    <property type="project" value="InterPro"/>
</dbReference>
<dbReference type="GO" id="GO:0051082">
    <property type="term" value="F:unfolded protein binding"/>
    <property type="evidence" value="ECO:0007669"/>
    <property type="project" value="UniProtKB-UniRule"/>
</dbReference>
<dbReference type="GO" id="GO:0008270">
    <property type="term" value="F:zinc ion binding"/>
    <property type="evidence" value="ECO:0007669"/>
    <property type="project" value="UniProtKB-UniRule"/>
</dbReference>
<dbReference type="GO" id="GO:0051085">
    <property type="term" value="P:chaperone cofactor-dependent protein refolding"/>
    <property type="evidence" value="ECO:0007669"/>
    <property type="project" value="TreeGrafter"/>
</dbReference>
<dbReference type="GO" id="GO:0006260">
    <property type="term" value="P:DNA replication"/>
    <property type="evidence" value="ECO:0007669"/>
    <property type="project" value="UniProtKB-KW"/>
</dbReference>
<dbReference type="GO" id="GO:0042026">
    <property type="term" value="P:protein refolding"/>
    <property type="evidence" value="ECO:0007669"/>
    <property type="project" value="TreeGrafter"/>
</dbReference>
<dbReference type="GO" id="GO:0009408">
    <property type="term" value="P:response to heat"/>
    <property type="evidence" value="ECO:0007669"/>
    <property type="project" value="InterPro"/>
</dbReference>
<dbReference type="CDD" id="cd06257">
    <property type="entry name" value="DnaJ"/>
    <property type="match status" value="1"/>
</dbReference>
<dbReference type="CDD" id="cd10747">
    <property type="entry name" value="DnaJ_C"/>
    <property type="match status" value="1"/>
</dbReference>
<dbReference type="CDD" id="cd10719">
    <property type="entry name" value="DnaJ_zf"/>
    <property type="match status" value="1"/>
</dbReference>
<dbReference type="FunFam" id="1.10.287.110:FF:000003">
    <property type="entry name" value="Molecular chaperone DnaJ"/>
    <property type="match status" value="1"/>
</dbReference>
<dbReference type="FunFam" id="2.10.230.10:FF:000002">
    <property type="entry name" value="Molecular chaperone DnaJ"/>
    <property type="match status" value="1"/>
</dbReference>
<dbReference type="FunFam" id="2.60.260.20:FF:000004">
    <property type="entry name" value="Molecular chaperone DnaJ"/>
    <property type="match status" value="1"/>
</dbReference>
<dbReference type="Gene3D" id="1.10.287.110">
    <property type="entry name" value="DnaJ domain"/>
    <property type="match status" value="1"/>
</dbReference>
<dbReference type="Gene3D" id="2.10.230.10">
    <property type="entry name" value="Heat shock protein DnaJ, cysteine-rich domain"/>
    <property type="match status" value="1"/>
</dbReference>
<dbReference type="Gene3D" id="2.60.260.20">
    <property type="entry name" value="Urease metallochaperone UreE, N-terminal domain"/>
    <property type="match status" value="2"/>
</dbReference>
<dbReference type="HAMAP" id="MF_01152">
    <property type="entry name" value="DnaJ"/>
    <property type="match status" value="1"/>
</dbReference>
<dbReference type="InterPro" id="IPR012724">
    <property type="entry name" value="DnaJ"/>
</dbReference>
<dbReference type="InterPro" id="IPR002939">
    <property type="entry name" value="DnaJ_C"/>
</dbReference>
<dbReference type="InterPro" id="IPR001623">
    <property type="entry name" value="DnaJ_domain"/>
</dbReference>
<dbReference type="InterPro" id="IPR018253">
    <property type="entry name" value="DnaJ_domain_CS"/>
</dbReference>
<dbReference type="InterPro" id="IPR008971">
    <property type="entry name" value="HSP40/DnaJ_pept-bd"/>
</dbReference>
<dbReference type="InterPro" id="IPR001305">
    <property type="entry name" value="HSP_DnaJ_Cys-rich_dom"/>
</dbReference>
<dbReference type="InterPro" id="IPR036410">
    <property type="entry name" value="HSP_DnaJ_Cys-rich_dom_sf"/>
</dbReference>
<dbReference type="InterPro" id="IPR036869">
    <property type="entry name" value="J_dom_sf"/>
</dbReference>
<dbReference type="NCBIfam" id="TIGR02349">
    <property type="entry name" value="DnaJ_bact"/>
    <property type="match status" value="1"/>
</dbReference>
<dbReference type="NCBIfam" id="NF008035">
    <property type="entry name" value="PRK10767.1"/>
    <property type="match status" value="1"/>
</dbReference>
<dbReference type="PANTHER" id="PTHR43096:SF48">
    <property type="entry name" value="CHAPERONE PROTEIN DNAJ"/>
    <property type="match status" value="1"/>
</dbReference>
<dbReference type="PANTHER" id="PTHR43096">
    <property type="entry name" value="DNAJ HOMOLOG 1, MITOCHONDRIAL-RELATED"/>
    <property type="match status" value="1"/>
</dbReference>
<dbReference type="Pfam" id="PF00226">
    <property type="entry name" value="DnaJ"/>
    <property type="match status" value="1"/>
</dbReference>
<dbReference type="Pfam" id="PF01556">
    <property type="entry name" value="DnaJ_C"/>
    <property type="match status" value="1"/>
</dbReference>
<dbReference type="Pfam" id="PF00684">
    <property type="entry name" value="DnaJ_CXXCXGXG"/>
    <property type="match status" value="1"/>
</dbReference>
<dbReference type="PRINTS" id="PR00625">
    <property type="entry name" value="JDOMAIN"/>
</dbReference>
<dbReference type="SMART" id="SM00271">
    <property type="entry name" value="DnaJ"/>
    <property type="match status" value="1"/>
</dbReference>
<dbReference type="SUPFAM" id="SSF46565">
    <property type="entry name" value="Chaperone J-domain"/>
    <property type="match status" value="1"/>
</dbReference>
<dbReference type="SUPFAM" id="SSF57938">
    <property type="entry name" value="DnaJ/Hsp40 cysteine-rich domain"/>
    <property type="match status" value="1"/>
</dbReference>
<dbReference type="SUPFAM" id="SSF49493">
    <property type="entry name" value="HSP40/DnaJ peptide-binding domain"/>
    <property type="match status" value="2"/>
</dbReference>
<dbReference type="PROSITE" id="PS00636">
    <property type="entry name" value="DNAJ_1"/>
    <property type="match status" value="1"/>
</dbReference>
<dbReference type="PROSITE" id="PS50076">
    <property type="entry name" value="DNAJ_2"/>
    <property type="match status" value="1"/>
</dbReference>
<dbReference type="PROSITE" id="PS51188">
    <property type="entry name" value="ZF_CR"/>
    <property type="match status" value="1"/>
</dbReference>
<sequence length="381" mass="40822">MSKRDFYEVLGVGRDASERDIKKAYKRLAMKYHPDRNSGDAGAAEKFKEVKEAYEILTDAQKKAAYDQYGHAAFEQGAGGFGGGGFGGGGADFGDIFGDVFGDIFGGGRRGGGPRAQRGSDLRYNMELSLEEAVRGCSKEIEVPTLVHCDACDGSGAKKGTSAQTCGTCHGHGQVQMRQGFFAVQQTCPTCHGKGKIIKDPCNVCHGQGRKQKTKTLNVKIPAGVDTGDRIRLSGEGEAGEMGAPAGDLYVQVHVKEHHIFERDGNNLYCEVPVSFAMAALGGEVEVPTLDGRVSLKVPAETQTGRMFRMRGKGVKGVRSAALGDLIVKLVVETPVNLSARQKELLKEFEESCGGEAATKHKPKAEGFFNGVKKFFDDLTS</sequence>
<feature type="chain" id="PRO_1000164283" description="Chaperone protein DnaJ">
    <location>
        <begin position="1"/>
        <end position="381"/>
    </location>
</feature>
<feature type="domain" description="J" evidence="1">
    <location>
        <begin position="5"/>
        <end position="70"/>
    </location>
</feature>
<feature type="repeat" description="CXXCXGXG motif">
    <location>
        <begin position="149"/>
        <end position="156"/>
    </location>
</feature>
<feature type="repeat" description="CXXCXGXG motif">
    <location>
        <begin position="166"/>
        <end position="173"/>
    </location>
</feature>
<feature type="repeat" description="CXXCXGXG motif">
    <location>
        <begin position="188"/>
        <end position="195"/>
    </location>
</feature>
<feature type="repeat" description="CXXCXGXG motif">
    <location>
        <begin position="202"/>
        <end position="209"/>
    </location>
</feature>
<feature type="zinc finger region" description="CR-type" evidence="1">
    <location>
        <begin position="136"/>
        <end position="214"/>
    </location>
</feature>
<feature type="binding site" evidence="1">
    <location>
        <position position="149"/>
    </location>
    <ligand>
        <name>Zn(2+)</name>
        <dbReference type="ChEBI" id="CHEBI:29105"/>
        <label>1</label>
    </ligand>
</feature>
<feature type="binding site" evidence="1">
    <location>
        <position position="152"/>
    </location>
    <ligand>
        <name>Zn(2+)</name>
        <dbReference type="ChEBI" id="CHEBI:29105"/>
        <label>1</label>
    </ligand>
</feature>
<feature type="binding site" evidence="1">
    <location>
        <position position="166"/>
    </location>
    <ligand>
        <name>Zn(2+)</name>
        <dbReference type="ChEBI" id="CHEBI:29105"/>
        <label>2</label>
    </ligand>
</feature>
<feature type="binding site" evidence="1">
    <location>
        <position position="169"/>
    </location>
    <ligand>
        <name>Zn(2+)</name>
        <dbReference type="ChEBI" id="CHEBI:29105"/>
        <label>2</label>
    </ligand>
</feature>
<feature type="binding site" evidence="1">
    <location>
        <position position="188"/>
    </location>
    <ligand>
        <name>Zn(2+)</name>
        <dbReference type="ChEBI" id="CHEBI:29105"/>
        <label>2</label>
    </ligand>
</feature>
<feature type="binding site" evidence="1">
    <location>
        <position position="191"/>
    </location>
    <ligand>
        <name>Zn(2+)</name>
        <dbReference type="ChEBI" id="CHEBI:29105"/>
        <label>2</label>
    </ligand>
</feature>
<feature type="binding site" evidence="1">
    <location>
        <position position="202"/>
    </location>
    <ligand>
        <name>Zn(2+)</name>
        <dbReference type="ChEBI" id="CHEBI:29105"/>
        <label>1</label>
    </ligand>
</feature>
<feature type="binding site" evidence="1">
    <location>
        <position position="205"/>
    </location>
    <ligand>
        <name>Zn(2+)</name>
        <dbReference type="ChEBI" id="CHEBI:29105"/>
        <label>1</label>
    </ligand>
</feature>
<reference key="1">
    <citation type="journal article" date="2008" name="PLoS ONE">
        <title>A recalibrated molecular clock and independent origins for the cholera pandemic clones.</title>
        <authorList>
            <person name="Feng L."/>
            <person name="Reeves P.R."/>
            <person name="Lan R."/>
            <person name="Ren Y."/>
            <person name="Gao C."/>
            <person name="Zhou Z."/>
            <person name="Ren Y."/>
            <person name="Cheng J."/>
            <person name="Wang W."/>
            <person name="Wang J."/>
            <person name="Qian W."/>
            <person name="Li D."/>
            <person name="Wang L."/>
        </authorList>
    </citation>
    <scope>NUCLEOTIDE SEQUENCE [LARGE SCALE GENOMIC DNA]</scope>
    <source>
        <strain>M66-2</strain>
    </source>
</reference>
<comment type="function">
    <text evidence="1">Participates actively in the response to hyperosmotic and heat shock by preventing the aggregation of stress-denatured proteins and by disaggregating proteins, also in an autonomous, DnaK-independent fashion. Unfolded proteins bind initially to DnaJ; upon interaction with the DnaJ-bound protein, DnaK hydrolyzes its bound ATP, resulting in the formation of a stable complex. GrpE releases ADP from DnaK; ATP binding to DnaK triggers the release of the substrate protein, thus completing the reaction cycle. Several rounds of ATP-dependent interactions between DnaJ, DnaK and GrpE are required for fully efficient folding. Also involved, together with DnaK and GrpE, in the DNA replication of plasmids through activation of initiation proteins.</text>
</comment>
<comment type="cofactor">
    <cofactor evidence="1">
        <name>Zn(2+)</name>
        <dbReference type="ChEBI" id="CHEBI:29105"/>
    </cofactor>
    <text evidence="1">Binds 2 Zn(2+) ions per monomer.</text>
</comment>
<comment type="subunit">
    <text evidence="1">Homodimer.</text>
</comment>
<comment type="subcellular location">
    <subcellularLocation>
        <location evidence="1">Cytoplasm</location>
    </subcellularLocation>
</comment>
<comment type="domain">
    <text evidence="1">The J domain is necessary and sufficient to stimulate DnaK ATPase activity. Zinc center 1 plays an important role in the autonomous, DnaK-independent chaperone activity of DnaJ. Zinc center 2 is essential for interaction with DnaK and for DnaJ activity.</text>
</comment>
<comment type="similarity">
    <text evidence="1">Belongs to the DnaJ family.</text>
</comment>
<accession>C3LTA6</accession>
<gene>
    <name evidence="1" type="primary">dnaJ</name>
    <name type="ordered locus">VCM66_0813</name>
</gene>